<reference key="1">
    <citation type="journal article" date="2006" name="Gene">
        <title>Adaptive selection of mitochondrial complex I subunits during primate radiation.</title>
        <authorList>
            <person name="Mishmar D."/>
            <person name="Ruiz-Pesini E."/>
            <person name="Mondragon-Palomino M."/>
            <person name="Procaccio V."/>
            <person name="Gaut B."/>
            <person name="Wallace D.C."/>
        </authorList>
    </citation>
    <scope>NUCLEOTIDE SEQUENCE [MRNA]</scope>
</reference>
<feature type="transit peptide" description="Mitochondrion" evidence="1">
    <location>
        <begin position="1"/>
        <end position="68"/>
    </location>
</feature>
<feature type="chain" id="PRO_0000251163" description="Acyl carrier protein, mitochondrial">
    <location>
        <begin position="69"/>
        <end position="156"/>
    </location>
</feature>
<feature type="domain" description="Carrier" evidence="6">
    <location>
        <begin position="77"/>
        <end position="152"/>
    </location>
</feature>
<feature type="modified residue" description="N6-acetyllysine" evidence="4">
    <location>
        <position position="88"/>
    </location>
</feature>
<feature type="modified residue" description="O-(pantetheine 4'-phosphoryl)serine" evidence="6">
    <location>
        <position position="112"/>
    </location>
</feature>
<gene>
    <name evidence="2" type="primary">NDUFAB1</name>
</gene>
<organism>
    <name type="scientific">Pongo pygmaeus</name>
    <name type="common">Bornean orangutan</name>
    <dbReference type="NCBI Taxonomy" id="9600"/>
    <lineage>
        <taxon>Eukaryota</taxon>
        <taxon>Metazoa</taxon>
        <taxon>Chordata</taxon>
        <taxon>Craniata</taxon>
        <taxon>Vertebrata</taxon>
        <taxon>Euteleostomi</taxon>
        <taxon>Mammalia</taxon>
        <taxon>Eutheria</taxon>
        <taxon>Euarchontoglires</taxon>
        <taxon>Primates</taxon>
        <taxon>Haplorrhini</taxon>
        <taxon>Catarrhini</taxon>
        <taxon>Hominidae</taxon>
        <taxon>Pongo</taxon>
    </lineage>
</organism>
<comment type="function">
    <text evidence="2 3 5">Carrier of the growing fatty acid chain in fatty acid biosynthesis (By similarity). Accessory and non-catalytic subunit of the mitochondrial membrane respiratory chain NADH dehydrogenase (Complex I), which functions in the transfer of electrons from NADH to the respiratory chain. Accessory protein, of the core iron-sulfur cluster (ISC) assembly complex, that regulates, in association with LYRM4, the stability and the cysteine desulfurase activity of NFS1 and participates in the [2Fe-2S] clusters assembly on the scaffolding protein ISCU (By similarity). The core iron-sulfur cluster (ISC) assembly complex is involved in the de novo synthesis of a [2Fe-2S] cluster, the first step of the mitochondrial iron-sulfur protein biogenesis. This process is initiated by the cysteine desulfurase complex (NFS1:LYRM4:NDUFAB1) that produces persulfide which is delivered on the scaffold protein ISCU in a FXN-dependent manner. Then this complex is stabilized by FDX2 which provides reducing equivalents to accomplish the [2Fe-2S] cluster assembly. Finally, the [2Fe-2S] cluster is transferred from ISCU to chaperone proteins, including HSCB, HSPA9 and GLRX5 (By similarity).</text>
</comment>
<comment type="subunit">
    <text evidence="2">Mammalian complex I is composed of 45 different subunits. Interacts with ETFRF1. Identified in a complex composed of MALSU1, MIEF1 upstream open reading frame protein and NDUFAB1; within the trimeric complex, MIEF1 upstream open reading frame protein functions as a bridging scaffold that interacts with MALSU1 on one side, and with NDUFAB1 on the other side. The complex interacts with the mitochondrial large ribosomal subunit. Interacts with alpha-1-microglobulin chain; this interaction is required for the maintenance of mitochondrial redox homeostasis. Component of the mitochondrial core iron-sulfur cluster (ISC) complex composed of NFS1, LYRM4, NDUFAB1, ISCU, FXN, and FDX2; this complex is a heterohexamer containing two copies of each monomer. Component of the cyteine desulfurase complex composed of NFS1, LYRM4 and NDUFAB1; this complex contributes to the stability and cysteine desulfurase activity of NFS1.</text>
</comment>
<comment type="subcellular location">
    <subcellularLocation>
        <location evidence="2">Mitochondrion</location>
    </subcellularLocation>
</comment>
<comment type="PTM">
    <text evidence="3">Phosphopantetheinylation at Ser-112 is essential for interactions with LYR motif-containing proteins.</text>
</comment>
<comment type="similarity">
    <text evidence="7">Belongs to the acyl carrier protein (ACP) family.</text>
</comment>
<name>ACPM_PONPY</name>
<protein>
    <recommendedName>
        <fullName evidence="2">Acyl carrier protein, mitochondrial</fullName>
        <shortName>ACP</shortName>
    </recommendedName>
    <alternativeName>
        <fullName>NADH-ubiquinone oxidoreductase 9.6 kDa subunit</fullName>
    </alternativeName>
</protein>
<evidence type="ECO:0000250" key="1"/>
<evidence type="ECO:0000250" key="2">
    <source>
        <dbReference type="UniProtKB" id="O14561"/>
    </source>
</evidence>
<evidence type="ECO:0000250" key="3">
    <source>
        <dbReference type="UniProtKB" id="P52505"/>
    </source>
</evidence>
<evidence type="ECO:0000250" key="4">
    <source>
        <dbReference type="UniProtKB" id="Q9CR21"/>
    </source>
</evidence>
<evidence type="ECO:0000250" key="5">
    <source>
        <dbReference type="UniProtKB" id="Q9H1K1"/>
    </source>
</evidence>
<evidence type="ECO:0000255" key="6">
    <source>
        <dbReference type="PROSITE-ProRule" id="PRU00258"/>
    </source>
</evidence>
<evidence type="ECO:0000305" key="7"/>
<accession>Q0MQC1</accession>
<keyword id="KW-0007">Acetylation</keyword>
<keyword id="KW-0249">Electron transport</keyword>
<keyword id="KW-0275">Fatty acid biosynthesis</keyword>
<keyword id="KW-0276">Fatty acid metabolism</keyword>
<keyword id="KW-0444">Lipid biosynthesis</keyword>
<keyword id="KW-0443">Lipid metabolism</keyword>
<keyword id="KW-0496">Mitochondrion</keyword>
<keyword id="KW-0596">Phosphopantetheine</keyword>
<keyword id="KW-0597">Phosphoprotein</keyword>
<keyword id="KW-0679">Respiratory chain</keyword>
<keyword id="KW-0809">Transit peptide</keyword>
<keyword id="KW-0813">Transport</keyword>
<sequence>MASRVLSAYVSRLPAAFAPLPRVRMLAVARPLSTALCSAGTQTRLGPLQPALVLAQVPGRVTQLCRQYSDMPPLTLEGIQDRVLYVLKLYDKIDPEKLSVNSHFMKDLGLDSLDQVEIIMAMEDEFGFEIPDIDAEKLMCPQEIVDYIADKKDVYE</sequence>
<proteinExistence type="evidence at transcript level"/>
<dbReference type="EMBL" id="DQ885713">
    <property type="protein sequence ID" value="ABH12222.1"/>
    <property type="molecule type" value="mRNA"/>
</dbReference>
<dbReference type="SMR" id="Q0MQC1"/>
<dbReference type="OrthoDB" id="448946at2759"/>
<dbReference type="GO" id="GO:0005739">
    <property type="term" value="C:mitochondrion"/>
    <property type="evidence" value="ECO:0007669"/>
    <property type="project" value="UniProtKB-SubCell"/>
</dbReference>
<dbReference type="GO" id="GO:0045271">
    <property type="term" value="C:respiratory chain complex I"/>
    <property type="evidence" value="ECO:0000250"/>
    <property type="project" value="UniProtKB"/>
</dbReference>
<dbReference type="GO" id="GO:0000035">
    <property type="term" value="F:acyl binding"/>
    <property type="evidence" value="ECO:0007669"/>
    <property type="project" value="TreeGrafter"/>
</dbReference>
<dbReference type="GO" id="GO:0000036">
    <property type="term" value="F:acyl carrier activity"/>
    <property type="evidence" value="ECO:0007669"/>
    <property type="project" value="TreeGrafter"/>
</dbReference>
<dbReference type="GO" id="GO:0140978">
    <property type="term" value="F:mitochondrial large ribosomal subunit binding"/>
    <property type="evidence" value="ECO:0000250"/>
    <property type="project" value="UniProtKB"/>
</dbReference>
<dbReference type="GO" id="GO:0044571">
    <property type="term" value="P:[2Fe-2S] cluster assembly"/>
    <property type="evidence" value="ECO:0000250"/>
    <property type="project" value="UniProtKB"/>
</dbReference>
<dbReference type="FunFam" id="1.10.1200.10:FF:000008">
    <property type="entry name" value="Acyl carrier protein"/>
    <property type="match status" value="1"/>
</dbReference>
<dbReference type="Gene3D" id="1.10.1200.10">
    <property type="entry name" value="ACP-like"/>
    <property type="match status" value="1"/>
</dbReference>
<dbReference type="HAMAP" id="MF_01217">
    <property type="entry name" value="Acyl_carrier"/>
    <property type="match status" value="1"/>
</dbReference>
<dbReference type="InterPro" id="IPR003231">
    <property type="entry name" value="ACP"/>
</dbReference>
<dbReference type="InterPro" id="IPR036736">
    <property type="entry name" value="ACP-like_sf"/>
</dbReference>
<dbReference type="InterPro" id="IPR009081">
    <property type="entry name" value="PP-bd_ACP"/>
</dbReference>
<dbReference type="InterPro" id="IPR006162">
    <property type="entry name" value="Ppantetheine_attach_site"/>
</dbReference>
<dbReference type="NCBIfam" id="TIGR00517">
    <property type="entry name" value="acyl_carrier"/>
    <property type="match status" value="1"/>
</dbReference>
<dbReference type="NCBIfam" id="NF002148">
    <property type="entry name" value="PRK00982.1-2"/>
    <property type="match status" value="1"/>
</dbReference>
<dbReference type="PANTHER" id="PTHR20863">
    <property type="entry name" value="ACYL CARRIER PROTEIN"/>
    <property type="match status" value="1"/>
</dbReference>
<dbReference type="PANTHER" id="PTHR20863:SF28">
    <property type="entry name" value="ACYL CARRIER PROTEIN, MITOCHONDRIAL"/>
    <property type="match status" value="1"/>
</dbReference>
<dbReference type="Pfam" id="PF00550">
    <property type="entry name" value="PP-binding"/>
    <property type="match status" value="1"/>
</dbReference>
<dbReference type="SUPFAM" id="SSF47336">
    <property type="entry name" value="ACP-like"/>
    <property type="match status" value="1"/>
</dbReference>
<dbReference type="PROSITE" id="PS50075">
    <property type="entry name" value="CARRIER"/>
    <property type="match status" value="1"/>
</dbReference>
<dbReference type="PROSITE" id="PS00012">
    <property type="entry name" value="PHOSPHOPANTETHEINE"/>
    <property type="match status" value="1"/>
</dbReference>